<proteinExistence type="inferred from homology"/>
<reference key="1">
    <citation type="journal article" date="2008" name="Genome Res.">
        <title>Chlamydia trachomatis: genome sequence analysis of lymphogranuloma venereum isolates.</title>
        <authorList>
            <person name="Thomson N.R."/>
            <person name="Holden M.T.G."/>
            <person name="Carder C."/>
            <person name="Lennard N."/>
            <person name="Lockey S.J."/>
            <person name="Marsh P."/>
            <person name="Skipp P."/>
            <person name="O'Connor C.D."/>
            <person name="Goodhead I."/>
            <person name="Norbertzcak H."/>
            <person name="Harris B."/>
            <person name="Ormond D."/>
            <person name="Rance R."/>
            <person name="Quail M.A."/>
            <person name="Parkhill J."/>
            <person name="Stephens R.S."/>
            <person name="Clarke I.N."/>
        </authorList>
    </citation>
    <scope>NUCLEOTIDE SEQUENCE [LARGE SCALE GENOMIC DNA]</scope>
    <source>
        <strain>UCH-1/proctitis</strain>
    </source>
</reference>
<evidence type="ECO:0000255" key="1">
    <source>
        <dbReference type="HAMAP-Rule" id="MF_00144"/>
    </source>
</evidence>
<name>MNMA_CHLTB</name>
<sequence>MRKTVIVAMSGGVDSSVVAYLLKKQGEYNVVGLFMKNWGEQDENGECTATKDFRDVERIAEQLSIPYYTVSFSKEYKERVFSRFLREYANGYTPNPDVLCNREIKFDLLQKKVLELKGDFLATGHYCRGGADGTGLSRGIDPNKDQSYFLCGTPKDALSNVLFPLGGMYKTEVRRIAQEAGLATATKKDSTGICFIGKRPFKSFLEQFVADSPGDIIDFDTQQVVGRHEGAHYYTIGQRRGLNIGGMEKPCYVLSKNMEKNIVYIVRGEDHPLLYRQELLAKELNWFVPLQEPMICSAKVRYRSPDEKCSVYPLEDGTVKVIFDVPVKAVTPGQTVAFYQGDICLGGGVIEVPMIHQL</sequence>
<gene>
    <name evidence="1" type="primary">mnmA</name>
    <name type="ordered locus">CTLon_0535</name>
</gene>
<comment type="function">
    <text evidence="1">Catalyzes the 2-thiolation of uridine at the wobble position (U34) of tRNA, leading to the formation of s(2)U34.</text>
</comment>
<comment type="catalytic activity">
    <reaction evidence="1">
        <text>S-sulfanyl-L-cysteinyl-[protein] + uridine(34) in tRNA + AH2 + ATP = 2-thiouridine(34) in tRNA + L-cysteinyl-[protein] + A + AMP + diphosphate + H(+)</text>
        <dbReference type="Rhea" id="RHEA:47032"/>
        <dbReference type="Rhea" id="RHEA-COMP:10131"/>
        <dbReference type="Rhea" id="RHEA-COMP:11726"/>
        <dbReference type="Rhea" id="RHEA-COMP:11727"/>
        <dbReference type="Rhea" id="RHEA-COMP:11728"/>
        <dbReference type="ChEBI" id="CHEBI:13193"/>
        <dbReference type="ChEBI" id="CHEBI:15378"/>
        <dbReference type="ChEBI" id="CHEBI:17499"/>
        <dbReference type="ChEBI" id="CHEBI:29950"/>
        <dbReference type="ChEBI" id="CHEBI:30616"/>
        <dbReference type="ChEBI" id="CHEBI:33019"/>
        <dbReference type="ChEBI" id="CHEBI:61963"/>
        <dbReference type="ChEBI" id="CHEBI:65315"/>
        <dbReference type="ChEBI" id="CHEBI:87170"/>
        <dbReference type="ChEBI" id="CHEBI:456215"/>
        <dbReference type="EC" id="2.8.1.13"/>
    </reaction>
</comment>
<comment type="subcellular location">
    <subcellularLocation>
        <location evidence="1">Cytoplasm</location>
    </subcellularLocation>
</comment>
<comment type="similarity">
    <text evidence="1">Belongs to the MnmA/TRMU family.</text>
</comment>
<protein>
    <recommendedName>
        <fullName evidence="1">tRNA-specific 2-thiouridylase MnmA</fullName>
        <ecNumber evidence="1">2.8.1.13</ecNumber>
    </recommendedName>
</protein>
<dbReference type="EC" id="2.8.1.13" evidence="1"/>
<dbReference type="EMBL" id="AM884177">
    <property type="protein sequence ID" value="CAP06933.1"/>
    <property type="molecule type" value="Genomic_DNA"/>
</dbReference>
<dbReference type="RefSeq" id="WP_009873701.1">
    <property type="nucleotide sequence ID" value="NC_010280.2"/>
</dbReference>
<dbReference type="SMR" id="B0BBR8"/>
<dbReference type="KEGG" id="ctl:CTLon_0535"/>
<dbReference type="HOGENOM" id="CLU_035188_1_0_0"/>
<dbReference type="Proteomes" id="UP001154401">
    <property type="component" value="Chromosome"/>
</dbReference>
<dbReference type="GO" id="GO:0005737">
    <property type="term" value="C:cytoplasm"/>
    <property type="evidence" value="ECO:0007669"/>
    <property type="project" value="UniProtKB-SubCell"/>
</dbReference>
<dbReference type="GO" id="GO:0005524">
    <property type="term" value="F:ATP binding"/>
    <property type="evidence" value="ECO:0007669"/>
    <property type="project" value="UniProtKB-KW"/>
</dbReference>
<dbReference type="GO" id="GO:0000049">
    <property type="term" value="F:tRNA binding"/>
    <property type="evidence" value="ECO:0007669"/>
    <property type="project" value="UniProtKB-KW"/>
</dbReference>
<dbReference type="GO" id="GO:0103016">
    <property type="term" value="F:tRNA-uridine 2-sulfurtransferase activity"/>
    <property type="evidence" value="ECO:0007669"/>
    <property type="project" value="UniProtKB-EC"/>
</dbReference>
<dbReference type="GO" id="GO:0002143">
    <property type="term" value="P:tRNA wobble position uridine thiolation"/>
    <property type="evidence" value="ECO:0007669"/>
    <property type="project" value="TreeGrafter"/>
</dbReference>
<dbReference type="CDD" id="cd01998">
    <property type="entry name" value="MnmA_TRMU-like"/>
    <property type="match status" value="1"/>
</dbReference>
<dbReference type="FunFam" id="2.30.30.280:FF:000001">
    <property type="entry name" value="tRNA-specific 2-thiouridylase MnmA"/>
    <property type="match status" value="1"/>
</dbReference>
<dbReference type="FunFam" id="2.40.30.10:FF:000023">
    <property type="entry name" value="tRNA-specific 2-thiouridylase MnmA"/>
    <property type="match status" value="1"/>
</dbReference>
<dbReference type="FunFam" id="3.40.50.620:FF:000115">
    <property type="entry name" value="tRNA-specific 2-thiouridylase MnmA"/>
    <property type="match status" value="1"/>
</dbReference>
<dbReference type="Gene3D" id="2.30.30.280">
    <property type="entry name" value="Adenine nucleotide alpha hydrolases-like domains"/>
    <property type="match status" value="1"/>
</dbReference>
<dbReference type="Gene3D" id="3.40.50.620">
    <property type="entry name" value="HUPs"/>
    <property type="match status" value="1"/>
</dbReference>
<dbReference type="Gene3D" id="2.40.30.10">
    <property type="entry name" value="Translation factors"/>
    <property type="match status" value="1"/>
</dbReference>
<dbReference type="HAMAP" id="MF_00144">
    <property type="entry name" value="tRNA_thiouridyl_MnmA"/>
    <property type="match status" value="1"/>
</dbReference>
<dbReference type="InterPro" id="IPR004506">
    <property type="entry name" value="MnmA-like"/>
</dbReference>
<dbReference type="InterPro" id="IPR046885">
    <property type="entry name" value="MnmA-like_C"/>
</dbReference>
<dbReference type="InterPro" id="IPR046884">
    <property type="entry name" value="MnmA-like_central"/>
</dbReference>
<dbReference type="InterPro" id="IPR023382">
    <property type="entry name" value="MnmA-like_central_sf"/>
</dbReference>
<dbReference type="InterPro" id="IPR014729">
    <property type="entry name" value="Rossmann-like_a/b/a_fold"/>
</dbReference>
<dbReference type="NCBIfam" id="NF001138">
    <property type="entry name" value="PRK00143.1"/>
    <property type="match status" value="1"/>
</dbReference>
<dbReference type="NCBIfam" id="TIGR00420">
    <property type="entry name" value="trmU"/>
    <property type="match status" value="1"/>
</dbReference>
<dbReference type="PANTHER" id="PTHR11933:SF5">
    <property type="entry name" value="MITOCHONDRIAL TRNA-SPECIFIC 2-THIOURIDYLASE 1"/>
    <property type="match status" value="1"/>
</dbReference>
<dbReference type="PANTHER" id="PTHR11933">
    <property type="entry name" value="TRNA 5-METHYLAMINOMETHYL-2-THIOURIDYLATE -METHYLTRANSFERASE"/>
    <property type="match status" value="1"/>
</dbReference>
<dbReference type="Pfam" id="PF03054">
    <property type="entry name" value="tRNA_Me_trans"/>
    <property type="match status" value="1"/>
</dbReference>
<dbReference type="Pfam" id="PF20258">
    <property type="entry name" value="tRNA_Me_trans_C"/>
    <property type="match status" value="1"/>
</dbReference>
<dbReference type="Pfam" id="PF20259">
    <property type="entry name" value="tRNA_Me_trans_M"/>
    <property type="match status" value="1"/>
</dbReference>
<dbReference type="SUPFAM" id="SSF52402">
    <property type="entry name" value="Adenine nucleotide alpha hydrolases-like"/>
    <property type="match status" value="1"/>
</dbReference>
<feature type="chain" id="PRO_0000349575" description="tRNA-specific 2-thiouridylase MnmA">
    <location>
        <begin position="1"/>
        <end position="358"/>
    </location>
</feature>
<feature type="region of interest" description="Interaction with target base in tRNA" evidence="1">
    <location>
        <begin position="95"/>
        <end position="97"/>
    </location>
</feature>
<feature type="region of interest" description="Interaction with tRNA" evidence="1">
    <location>
        <begin position="144"/>
        <end position="146"/>
    </location>
</feature>
<feature type="region of interest" description="Interaction with tRNA" evidence="1">
    <location>
        <begin position="301"/>
        <end position="302"/>
    </location>
</feature>
<feature type="active site" description="Nucleophile" evidence="1">
    <location>
        <position position="100"/>
    </location>
</feature>
<feature type="active site" description="Cysteine persulfide intermediate" evidence="1">
    <location>
        <position position="194"/>
    </location>
</feature>
<feature type="binding site" evidence="1">
    <location>
        <begin position="8"/>
        <end position="15"/>
    </location>
    <ligand>
        <name>ATP</name>
        <dbReference type="ChEBI" id="CHEBI:30616"/>
    </ligand>
</feature>
<feature type="binding site" evidence="1">
    <location>
        <position position="35"/>
    </location>
    <ligand>
        <name>ATP</name>
        <dbReference type="ChEBI" id="CHEBI:30616"/>
    </ligand>
</feature>
<feature type="binding site" evidence="1">
    <location>
        <position position="124"/>
    </location>
    <ligand>
        <name>ATP</name>
        <dbReference type="ChEBI" id="CHEBI:30616"/>
    </ligand>
</feature>
<feature type="site" description="Interaction with tRNA" evidence="1">
    <location>
        <position position="125"/>
    </location>
</feature>
<feature type="site" description="Interaction with tRNA" evidence="1">
    <location>
        <position position="334"/>
    </location>
</feature>
<feature type="disulfide bond" description="Alternate" evidence="1">
    <location>
        <begin position="100"/>
        <end position="194"/>
    </location>
</feature>
<accession>B0BBR8</accession>
<organism>
    <name type="scientific">Chlamydia trachomatis serovar L2b (strain UCH-1/proctitis)</name>
    <dbReference type="NCBI Taxonomy" id="471473"/>
    <lineage>
        <taxon>Bacteria</taxon>
        <taxon>Pseudomonadati</taxon>
        <taxon>Chlamydiota</taxon>
        <taxon>Chlamydiia</taxon>
        <taxon>Chlamydiales</taxon>
        <taxon>Chlamydiaceae</taxon>
        <taxon>Chlamydia/Chlamydophila group</taxon>
        <taxon>Chlamydia</taxon>
    </lineage>
</organism>
<keyword id="KW-0067">ATP-binding</keyword>
<keyword id="KW-0963">Cytoplasm</keyword>
<keyword id="KW-1015">Disulfide bond</keyword>
<keyword id="KW-0547">Nucleotide-binding</keyword>
<keyword id="KW-0694">RNA-binding</keyword>
<keyword id="KW-0808">Transferase</keyword>
<keyword id="KW-0819">tRNA processing</keyword>
<keyword id="KW-0820">tRNA-binding</keyword>